<feature type="chain" id="PRO_0000303772" description="Exodeoxyribonuclease 7 large subunit">
    <location>
        <begin position="1"/>
        <end position="416"/>
    </location>
</feature>
<organism>
    <name type="scientific">Acidothermus cellulolyticus (strain ATCC 43068 / DSM 8971 / 11B)</name>
    <dbReference type="NCBI Taxonomy" id="351607"/>
    <lineage>
        <taxon>Bacteria</taxon>
        <taxon>Bacillati</taxon>
        <taxon>Actinomycetota</taxon>
        <taxon>Actinomycetes</taxon>
        <taxon>Acidothermales</taxon>
        <taxon>Acidothermaceae</taxon>
        <taxon>Acidothermus</taxon>
    </lineage>
</organism>
<comment type="function">
    <text evidence="1">Bidirectionally degrades single-stranded DNA into large acid-insoluble oligonucleotides, which are then degraded further into small acid-soluble oligonucleotides.</text>
</comment>
<comment type="catalytic activity">
    <reaction evidence="1">
        <text>Exonucleolytic cleavage in either 5'- to 3'- or 3'- to 5'-direction to yield nucleoside 5'-phosphates.</text>
        <dbReference type="EC" id="3.1.11.6"/>
    </reaction>
</comment>
<comment type="subunit">
    <text evidence="1">Heterooligomer composed of large and small subunits.</text>
</comment>
<comment type="subcellular location">
    <subcellularLocation>
        <location evidence="1">Cytoplasm</location>
    </subcellularLocation>
</comment>
<comment type="similarity">
    <text evidence="1">Belongs to the XseA family.</text>
</comment>
<proteinExistence type="inferred from homology"/>
<accession>A0LW37</accession>
<protein>
    <recommendedName>
        <fullName evidence="1">Exodeoxyribonuclease 7 large subunit</fullName>
        <ecNumber evidence="1">3.1.11.6</ecNumber>
    </recommendedName>
    <alternativeName>
        <fullName evidence="1">Exodeoxyribonuclease VII large subunit</fullName>
        <shortName evidence="1">Exonuclease VII large subunit</shortName>
    </alternativeName>
</protein>
<keyword id="KW-0963">Cytoplasm</keyword>
<keyword id="KW-0269">Exonuclease</keyword>
<keyword id="KW-0378">Hydrolase</keyword>
<keyword id="KW-0540">Nuclease</keyword>
<keyword id="KW-1185">Reference proteome</keyword>
<sequence>MALTSSAESPVPVREVARQIGLWVGRLGRIWVDGQLTQIKIRPGTNTVFFNLRDPSANVTLLATCPRQVFECIEPKPTEGLRVAVLGKPEFYVPRGSLQLVVHDIRPIGIGDLLARLERLKKILAAEGLFAPERKRPLPFLPRVVGLICGRGSAAERDVVENARRRWPAVRFDIAAVAVQGPYAVPEIVAALRRLDDDPVVDVIVIARGGGSVEDLLPFSDETLLRAVAACRTPVVSAIGHETDTPLLDFVADVAASTPTDAARRIVPDVAEQYAQLAQLGDRLRNALRHRIDREQQVLDTLRSRPVLAHPVQDINRRGEEILRLVRAGRTALDTAIRAADADARHLVARLRALAPAATLERGYAIVLDPAGRVIRGADEVQTGDELVVRLGRGRLRVTVTDVAPAETDHPLGSLA</sequence>
<reference key="1">
    <citation type="journal article" date="2009" name="Genome Res.">
        <title>Complete genome of the cellulolytic thermophile Acidothermus cellulolyticus 11B provides insights into its ecophysiological and evolutionary adaptations.</title>
        <authorList>
            <person name="Barabote R.D."/>
            <person name="Xie G."/>
            <person name="Leu D.H."/>
            <person name="Normand P."/>
            <person name="Necsulea A."/>
            <person name="Daubin V."/>
            <person name="Medigue C."/>
            <person name="Adney W.S."/>
            <person name="Xu X.C."/>
            <person name="Lapidus A."/>
            <person name="Parales R.E."/>
            <person name="Detter C."/>
            <person name="Pujic P."/>
            <person name="Bruce D."/>
            <person name="Lavire C."/>
            <person name="Challacombe J.F."/>
            <person name="Brettin T.S."/>
            <person name="Berry A.M."/>
        </authorList>
    </citation>
    <scope>NUCLEOTIDE SEQUENCE [LARGE SCALE GENOMIC DNA]</scope>
    <source>
        <strain>ATCC 43068 / DSM 8971 / 11B</strain>
    </source>
</reference>
<dbReference type="EC" id="3.1.11.6" evidence="1"/>
<dbReference type="EMBL" id="CP000481">
    <property type="protein sequence ID" value="ABK53647.1"/>
    <property type="molecule type" value="Genomic_DNA"/>
</dbReference>
<dbReference type="RefSeq" id="WP_011720710.1">
    <property type="nucleotide sequence ID" value="NC_008578.1"/>
</dbReference>
<dbReference type="SMR" id="A0LW37"/>
<dbReference type="FunCoup" id="A0LW37">
    <property type="interactions" value="92"/>
</dbReference>
<dbReference type="STRING" id="351607.Acel_1875"/>
<dbReference type="KEGG" id="ace:Acel_1875"/>
<dbReference type="eggNOG" id="COG1570">
    <property type="taxonomic scope" value="Bacteria"/>
</dbReference>
<dbReference type="HOGENOM" id="CLU_023625_2_1_11"/>
<dbReference type="InParanoid" id="A0LW37"/>
<dbReference type="OrthoDB" id="9802795at2"/>
<dbReference type="Proteomes" id="UP000008221">
    <property type="component" value="Chromosome"/>
</dbReference>
<dbReference type="GO" id="GO:0005737">
    <property type="term" value="C:cytoplasm"/>
    <property type="evidence" value="ECO:0007669"/>
    <property type="project" value="UniProtKB-SubCell"/>
</dbReference>
<dbReference type="GO" id="GO:0009318">
    <property type="term" value="C:exodeoxyribonuclease VII complex"/>
    <property type="evidence" value="ECO:0007669"/>
    <property type="project" value="InterPro"/>
</dbReference>
<dbReference type="GO" id="GO:0008855">
    <property type="term" value="F:exodeoxyribonuclease VII activity"/>
    <property type="evidence" value="ECO:0007669"/>
    <property type="project" value="UniProtKB-UniRule"/>
</dbReference>
<dbReference type="GO" id="GO:0003676">
    <property type="term" value="F:nucleic acid binding"/>
    <property type="evidence" value="ECO:0007669"/>
    <property type="project" value="InterPro"/>
</dbReference>
<dbReference type="GO" id="GO:0006308">
    <property type="term" value="P:DNA catabolic process"/>
    <property type="evidence" value="ECO:0007669"/>
    <property type="project" value="UniProtKB-UniRule"/>
</dbReference>
<dbReference type="CDD" id="cd04489">
    <property type="entry name" value="ExoVII_LU_OBF"/>
    <property type="match status" value="1"/>
</dbReference>
<dbReference type="HAMAP" id="MF_00378">
    <property type="entry name" value="Exonuc_7_L"/>
    <property type="match status" value="1"/>
</dbReference>
<dbReference type="InterPro" id="IPR003753">
    <property type="entry name" value="Exonuc_VII_L"/>
</dbReference>
<dbReference type="InterPro" id="IPR020579">
    <property type="entry name" value="Exonuc_VII_lsu_C"/>
</dbReference>
<dbReference type="InterPro" id="IPR025824">
    <property type="entry name" value="OB-fold_nuc-bd_dom"/>
</dbReference>
<dbReference type="NCBIfam" id="TIGR00237">
    <property type="entry name" value="xseA"/>
    <property type="match status" value="1"/>
</dbReference>
<dbReference type="PANTHER" id="PTHR30008">
    <property type="entry name" value="EXODEOXYRIBONUCLEASE 7 LARGE SUBUNIT"/>
    <property type="match status" value="1"/>
</dbReference>
<dbReference type="PANTHER" id="PTHR30008:SF0">
    <property type="entry name" value="EXODEOXYRIBONUCLEASE 7 LARGE SUBUNIT"/>
    <property type="match status" value="1"/>
</dbReference>
<dbReference type="Pfam" id="PF02601">
    <property type="entry name" value="Exonuc_VII_L"/>
    <property type="match status" value="2"/>
</dbReference>
<dbReference type="Pfam" id="PF13742">
    <property type="entry name" value="tRNA_anti_2"/>
    <property type="match status" value="1"/>
</dbReference>
<gene>
    <name evidence="1" type="primary">xseA</name>
    <name type="ordered locus">Acel_1875</name>
</gene>
<evidence type="ECO:0000255" key="1">
    <source>
        <dbReference type="HAMAP-Rule" id="MF_00378"/>
    </source>
</evidence>
<name>EX7L_ACIC1</name>